<keyword id="KW-0067">ATP-binding</keyword>
<keyword id="KW-0436">Ligase</keyword>
<keyword id="KW-0460">Magnesium</keyword>
<keyword id="KW-0479">Metal-binding</keyword>
<keyword id="KW-0520">NAD</keyword>
<keyword id="KW-0547">Nucleotide-binding</keyword>
<keyword id="KW-1185">Reference proteome</keyword>
<organism>
    <name type="scientific">Aeropyrum pernix (strain ATCC 700893 / DSM 11879 / JCM 9820 / NBRC 100138 / K1)</name>
    <dbReference type="NCBI Taxonomy" id="272557"/>
    <lineage>
        <taxon>Archaea</taxon>
        <taxon>Thermoproteota</taxon>
        <taxon>Thermoprotei</taxon>
        <taxon>Desulfurococcales</taxon>
        <taxon>Desulfurococcaceae</taxon>
        <taxon>Aeropyrum</taxon>
    </lineage>
</organism>
<name>NADE_AERPE</name>
<feature type="chain" id="PRO_0000152220" description="NH(3)-dependent NAD(+) synthetase">
    <location>
        <begin position="1"/>
        <end position="286"/>
    </location>
</feature>
<feature type="region of interest" description="Disordered" evidence="2">
    <location>
        <begin position="257"/>
        <end position="286"/>
    </location>
</feature>
<feature type="compositionally biased region" description="Basic residues" evidence="2">
    <location>
        <begin position="277"/>
        <end position="286"/>
    </location>
</feature>
<feature type="binding site" evidence="1">
    <location>
        <begin position="43"/>
        <end position="50"/>
    </location>
    <ligand>
        <name>ATP</name>
        <dbReference type="ChEBI" id="CHEBI:30616"/>
    </ligand>
</feature>
<feature type="binding site" evidence="1">
    <location>
        <position position="49"/>
    </location>
    <ligand>
        <name>Mg(2+)</name>
        <dbReference type="ChEBI" id="CHEBI:18420"/>
    </ligand>
</feature>
<feature type="binding site" evidence="1">
    <location>
        <position position="131"/>
    </location>
    <ligand>
        <name>deamido-NAD(+)</name>
        <dbReference type="ChEBI" id="CHEBI:58437"/>
    </ligand>
</feature>
<feature type="binding site" evidence="1">
    <location>
        <position position="151"/>
    </location>
    <ligand>
        <name>ATP</name>
        <dbReference type="ChEBI" id="CHEBI:30616"/>
    </ligand>
</feature>
<feature type="binding site" evidence="1">
    <location>
        <position position="156"/>
    </location>
    <ligand>
        <name>Mg(2+)</name>
        <dbReference type="ChEBI" id="CHEBI:18420"/>
    </ligand>
</feature>
<feature type="binding site" evidence="1">
    <location>
        <position position="164"/>
    </location>
    <ligand>
        <name>deamido-NAD(+)</name>
        <dbReference type="ChEBI" id="CHEBI:58437"/>
    </ligand>
</feature>
<feature type="binding site" evidence="1">
    <location>
        <position position="171"/>
    </location>
    <ligand>
        <name>deamido-NAD(+)</name>
        <dbReference type="ChEBI" id="CHEBI:58437"/>
    </ligand>
</feature>
<feature type="binding site" evidence="1">
    <location>
        <position position="180"/>
    </location>
    <ligand>
        <name>ATP</name>
        <dbReference type="ChEBI" id="CHEBI:30616"/>
    </ligand>
</feature>
<feature type="binding site" evidence="1">
    <location>
        <position position="202"/>
    </location>
    <ligand>
        <name>ATP</name>
        <dbReference type="ChEBI" id="CHEBI:30616"/>
    </ligand>
</feature>
<feature type="binding site" evidence="1">
    <location>
        <begin position="262"/>
        <end position="263"/>
    </location>
    <ligand>
        <name>deamido-NAD(+)</name>
        <dbReference type="ChEBI" id="CHEBI:58437"/>
    </ligand>
</feature>
<dbReference type="EC" id="6.3.1.5" evidence="1"/>
<dbReference type="EMBL" id="BA000002">
    <property type="protein sequence ID" value="BAA80968.2"/>
    <property type="molecule type" value="Genomic_DNA"/>
</dbReference>
<dbReference type="PIR" id="H72497">
    <property type="entry name" value="H72497"/>
</dbReference>
<dbReference type="RefSeq" id="WP_010866702.1">
    <property type="nucleotide sequence ID" value="NC_000854.2"/>
</dbReference>
<dbReference type="SMR" id="Q9YAI1"/>
<dbReference type="STRING" id="272557.APE_1958.1"/>
<dbReference type="EnsemblBacteria" id="BAA80968">
    <property type="protein sequence ID" value="BAA80968"/>
    <property type="gene ID" value="APE_1958.1"/>
</dbReference>
<dbReference type="GeneID" id="1446370"/>
<dbReference type="KEGG" id="ape:APE_1958.1"/>
<dbReference type="PATRIC" id="fig|272557.25.peg.1305"/>
<dbReference type="eggNOG" id="arCOG00069">
    <property type="taxonomic scope" value="Archaea"/>
</dbReference>
<dbReference type="UniPathway" id="UPA00253">
    <property type="reaction ID" value="UER00333"/>
</dbReference>
<dbReference type="Proteomes" id="UP000002518">
    <property type="component" value="Chromosome"/>
</dbReference>
<dbReference type="GO" id="GO:0005737">
    <property type="term" value="C:cytoplasm"/>
    <property type="evidence" value="ECO:0007669"/>
    <property type="project" value="InterPro"/>
</dbReference>
<dbReference type="GO" id="GO:0005524">
    <property type="term" value="F:ATP binding"/>
    <property type="evidence" value="ECO:0007669"/>
    <property type="project" value="UniProtKB-UniRule"/>
</dbReference>
<dbReference type="GO" id="GO:0004359">
    <property type="term" value="F:glutaminase activity"/>
    <property type="evidence" value="ECO:0007669"/>
    <property type="project" value="InterPro"/>
</dbReference>
<dbReference type="GO" id="GO:0046872">
    <property type="term" value="F:metal ion binding"/>
    <property type="evidence" value="ECO:0007669"/>
    <property type="project" value="UniProtKB-KW"/>
</dbReference>
<dbReference type="GO" id="GO:0003952">
    <property type="term" value="F:NAD+ synthase (glutamine-hydrolyzing) activity"/>
    <property type="evidence" value="ECO:0007669"/>
    <property type="project" value="InterPro"/>
</dbReference>
<dbReference type="GO" id="GO:0008795">
    <property type="term" value="F:NAD+ synthase activity"/>
    <property type="evidence" value="ECO:0007669"/>
    <property type="project" value="UniProtKB-UniRule"/>
</dbReference>
<dbReference type="GO" id="GO:0009435">
    <property type="term" value="P:NAD biosynthetic process"/>
    <property type="evidence" value="ECO:0007669"/>
    <property type="project" value="UniProtKB-UniRule"/>
</dbReference>
<dbReference type="CDD" id="cd00553">
    <property type="entry name" value="NAD_synthase"/>
    <property type="match status" value="1"/>
</dbReference>
<dbReference type="FunFam" id="3.40.50.620:FF:000106">
    <property type="entry name" value="Glutamine-dependent NAD(+) synthetase"/>
    <property type="match status" value="1"/>
</dbReference>
<dbReference type="Gene3D" id="3.40.50.620">
    <property type="entry name" value="HUPs"/>
    <property type="match status" value="1"/>
</dbReference>
<dbReference type="HAMAP" id="MF_00193">
    <property type="entry name" value="NadE_ammonia_dep"/>
    <property type="match status" value="1"/>
</dbReference>
<dbReference type="InterPro" id="IPR022310">
    <property type="entry name" value="NAD/GMP_synthase"/>
</dbReference>
<dbReference type="InterPro" id="IPR003694">
    <property type="entry name" value="NAD_synthase"/>
</dbReference>
<dbReference type="InterPro" id="IPR022926">
    <property type="entry name" value="NH(3)-dep_NAD(+)_synth"/>
</dbReference>
<dbReference type="InterPro" id="IPR014729">
    <property type="entry name" value="Rossmann-like_a/b/a_fold"/>
</dbReference>
<dbReference type="NCBIfam" id="TIGR00552">
    <property type="entry name" value="nadE"/>
    <property type="match status" value="1"/>
</dbReference>
<dbReference type="NCBIfam" id="NF010587">
    <property type="entry name" value="PRK13980.1"/>
    <property type="match status" value="1"/>
</dbReference>
<dbReference type="PANTHER" id="PTHR23090:SF9">
    <property type="entry name" value="GLUTAMINE-DEPENDENT NAD(+) SYNTHETASE"/>
    <property type="match status" value="1"/>
</dbReference>
<dbReference type="PANTHER" id="PTHR23090">
    <property type="entry name" value="NH 3 /GLUTAMINE-DEPENDENT NAD + SYNTHETASE"/>
    <property type="match status" value="1"/>
</dbReference>
<dbReference type="Pfam" id="PF02540">
    <property type="entry name" value="NAD_synthase"/>
    <property type="match status" value="1"/>
</dbReference>
<dbReference type="SUPFAM" id="SSF52402">
    <property type="entry name" value="Adenine nucleotide alpha hydrolases-like"/>
    <property type="match status" value="1"/>
</dbReference>
<comment type="function">
    <text evidence="1">Catalyzes the ATP-dependent amidation of deamido-NAD to form NAD. Uses ammonia as a nitrogen source.</text>
</comment>
<comment type="catalytic activity">
    <reaction evidence="1">
        <text>deamido-NAD(+) + NH4(+) + ATP = AMP + diphosphate + NAD(+) + H(+)</text>
        <dbReference type="Rhea" id="RHEA:21188"/>
        <dbReference type="ChEBI" id="CHEBI:15378"/>
        <dbReference type="ChEBI" id="CHEBI:28938"/>
        <dbReference type="ChEBI" id="CHEBI:30616"/>
        <dbReference type="ChEBI" id="CHEBI:33019"/>
        <dbReference type="ChEBI" id="CHEBI:57540"/>
        <dbReference type="ChEBI" id="CHEBI:58437"/>
        <dbReference type="ChEBI" id="CHEBI:456215"/>
        <dbReference type="EC" id="6.3.1.5"/>
    </reaction>
</comment>
<comment type="pathway">
    <text evidence="1">Cofactor biosynthesis; NAD(+) biosynthesis; NAD(+) from deamido-NAD(+) (ammonia route): step 1/1.</text>
</comment>
<comment type="subunit">
    <text evidence="1">Homodimer.</text>
</comment>
<comment type="similarity">
    <text evidence="1 3">Belongs to the NAD synthetase family.</text>
</comment>
<proteinExistence type="inferred from homology"/>
<accession>Q9YAI1</accession>
<protein>
    <recommendedName>
        <fullName evidence="1">NH(3)-dependent NAD(+) synthetase</fullName>
        <ecNumber evidence="1">6.3.1.5</ecNumber>
    </recommendedName>
</protein>
<sequence length="286" mass="31771">MAVNYKVSLDDVVDIDYNGVRQAITQFLRKYLEASGASGYVLGVSGGVDSSLALALAVDAVGSGRVTALIMPDREVTPERDVEDALRLVRSFGVEHAVIDISPIVMVYISALPIFEDEEKDRVPVGNLRARIRANILYYYANKLGKLVLGTGDRSEYLIGYFTKYGDAACDVAPLTVLYKSQVRRLAELIGVPRDIAYKPSSPRLWKGHEAEAELGLSYNEIDVILYSRFDLKIPWEEIPRATGLERAKVERVRLLHEASSHKRSPPASPDLGEIKKHYKQHAGKK</sequence>
<evidence type="ECO:0000255" key="1">
    <source>
        <dbReference type="HAMAP-Rule" id="MF_00193"/>
    </source>
</evidence>
<evidence type="ECO:0000256" key="2">
    <source>
        <dbReference type="SAM" id="MobiDB-lite"/>
    </source>
</evidence>
<evidence type="ECO:0000305" key="3"/>
<reference key="1">
    <citation type="journal article" date="1999" name="DNA Res.">
        <title>Complete genome sequence of an aerobic hyper-thermophilic crenarchaeon, Aeropyrum pernix K1.</title>
        <authorList>
            <person name="Kawarabayasi Y."/>
            <person name="Hino Y."/>
            <person name="Horikawa H."/>
            <person name="Yamazaki S."/>
            <person name="Haikawa Y."/>
            <person name="Jin-no K."/>
            <person name="Takahashi M."/>
            <person name="Sekine M."/>
            <person name="Baba S."/>
            <person name="Ankai A."/>
            <person name="Kosugi H."/>
            <person name="Hosoyama A."/>
            <person name="Fukui S."/>
            <person name="Nagai Y."/>
            <person name="Nishijima K."/>
            <person name="Nakazawa H."/>
            <person name="Takamiya M."/>
            <person name="Masuda S."/>
            <person name="Funahashi T."/>
            <person name="Tanaka T."/>
            <person name="Kudoh Y."/>
            <person name="Yamazaki J."/>
            <person name="Kushida N."/>
            <person name="Oguchi A."/>
            <person name="Aoki K."/>
            <person name="Kubota K."/>
            <person name="Nakamura Y."/>
            <person name="Nomura N."/>
            <person name="Sako Y."/>
            <person name="Kikuchi H."/>
        </authorList>
    </citation>
    <scope>NUCLEOTIDE SEQUENCE [LARGE SCALE GENOMIC DNA]</scope>
    <source>
        <strain>ATCC 700893 / DSM 11879 / JCM 9820 / NBRC 100138 / K1</strain>
    </source>
</reference>
<gene>
    <name evidence="1" type="primary">nadE</name>
    <name type="ordered locus">APE_1958.1</name>
</gene>